<protein>
    <recommendedName>
        <fullName evidence="1">Ribosomal RNA large subunit methyltransferase K/L</fullName>
    </recommendedName>
    <domain>
        <recommendedName>
            <fullName evidence="1">23S rRNA m2G2445 methyltransferase</fullName>
            <ecNumber evidence="1">2.1.1.173</ecNumber>
        </recommendedName>
        <alternativeName>
            <fullName evidence="1">rRNA (guanine-N(2)-)-methyltransferase RlmL</fullName>
        </alternativeName>
    </domain>
    <domain>
        <recommendedName>
            <fullName evidence="1">23S rRNA m7G2069 methyltransferase</fullName>
            <ecNumber evidence="1">2.1.1.264</ecNumber>
        </recommendedName>
        <alternativeName>
            <fullName evidence="1">rRNA (guanine-N(7)-)-methyltransferase RlmK</fullName>
        </alternativeName>
    </domain>
</protein>
<sequence>MNYSLFISCAKGLEYLLEDELKGLGLHVTQVSPQGVYGEASLPVIYNLCLWSRLANRIQLILFSGHAAKEQAVHQLCTDFHWQTVFTHDKTIAIEFHGASEQIRNTMFGAQIVKDGIVDHFRRLNGSRPSVDKEKPQILIHAHLKNDILTVSFDLVGYSLHQRGYRKKAGKAPLKENVAAAMLLRAKWPELAAQGYGLHDPFCGSGTLVIEAAMMAAHIAPGLLRQDQSLQYWARHQSSLWEKLRTQALQQVKPLAVKLVGTDTDSKVVALARSNAERAGVLPLVEFNTLSLNACRPGTKRGLVVCNPPYGERLGEVTQLVPLYQQLGTTLHTCYQGWQAAILTSSPVLAKALGLRADKQYTLYNGPLECKLYCLTLSAANKLKNTPNAPLSDNAQMLFNRLEKNRNHLQKWARKNQITCYRIYDADLPEYAYAIDIYNDYAVLQEYAPPASIPVHKAEKRSLEMLQVVPRALGIHPEKLIVKQRKQQKGSEQYQKIGKTSQRQIVTEGKAKLIVNLYDYLDTGLFLDHRLMRLKFAQLEQGTRFLNCFCYTASASVHAALAGALTTNVDLSKTYLLWAEDNFRLNDINLSKHQFLQYDCKEWMKTTRDKFDVIFLDPPSFSNSKRMSDILDIQRDHVSLINMAMRLLNPDGVLYFSTNLRQFKLEPMLKEKYAVQDITPQTIDQDFKRNSKIHHCFKIVMPHFADN</sequence>
<feature type="chain" id="PRO_0000366770" description="Ribosomal RNA large subunit methyltransferase K/L">
    <location>
        <begin position="1"/>
        <end position="707"/>
    </location>
</feature>
<feature type="domain" description="THUMP" evidence="1">
    <location>
        <begin position="44"/>
        <end position="155"/>
    </location>
</feature>
<name>RLMKL_LEGPL</name>
<proteinExistence type="inferred from homology"/>
<keyword id="KW-0963">Cytoplasm</keyword>
<keyword id="KW-0489">Methyltransferase</keyword>
<keyword id="KW-0694">RNA-binding</keyword>
<keyword id="KW-0698">rRNA processing</keyword>
<keyword id="KW-0949">S-adenosyl-L-methionine</keyword>
<keyword id="KW-0808">Transferase</keyword>
<dbReference type="EC" id="2.1.1.173" evidence="1"/>
<dbReference type="EC" id="2.1.1.264" evidence="1"/>
<dbReference type="EMBL" id="CR628337">
    <property type="protein sequence ID" value="CAH14253.1"/>
    <property type="molecule type" value="Genomic_DNA"/>
</dbReference>
<dbReference type="RefSeq" id="WP_011214315.1">
    <property type="nucleotide sequence ID" value="NC_006369.1"/>
</dbReference>
<dbReference type="SMR" id="Q5X0J6"/>
<dbReference type="KEGG" id="lpf:lpl0023"/>
<dbReference type="LegioList" id="lpl0023"/>
<dbReference type="HOGENOM" id="CLU_014042_2_0_6"/>
<dbReference type="Proteomes" id="UP000002517">
    <property type="component" value="Chromosome"/>
</dbReference>
<dbReference type="GO" id="GO:0005737">
    <property type="term" value="C:cytoplasm"/>
    <property type="evidence" value="ECO:0007669"/>
    <property type="project" value="UniProtKB-SubCell"/>
</dbReference>
<dbReference type="GO" id="GO:0052915">
    <property type="term" value="F:23S rRNA (guanine(2445)-N(2))-methyltransferase activity"/>
    <property type="evidence" value="ECO:0007669"/>
    <property type="project" value="UniProtKB-UniRule"/>
</dbReference>
<dbReference type="GO" id="GO:0003723">
    <property type="term" value="F:RNA binding"/>
    <property type="evidence" value="ECO:0007669"/>
    <property type="project" value="UniProtKB-KW"/>
</dbReference>
<dbReference type="GO" id="GO:0070043">
    <property type="term" value="F:rRNA (guanine-N7-)-methyltransferase activity"/>
    <property type="evidence" value="ECO:0007669"/>
    <property type="project" value="UniProtKB-UniRule"/>
</dbReference>
<dbReference type="CDD" id="cd02440">
    <property type="entry name" value="AdoMet_MTases"/>
    <property type="match status" value="1"/>
</dbReference>
<dbReference type="CDD" id="cd11715">
    <property type="entry name" value="THUMP_AdoMetMT"/>
    <property type="match status" value="1"/>
</dbReference>
<dbReference type="Gene3D" id="3.30.2130.30">
    <property type="match status" value="1"/>
</dbReference>
<dbReference type="Gene3D" id="3.30.750.80">
    <property type="entry name" value="RNA methyltransferase domain (HRMD) like"/>
    <property type="match status" value="1"/>
</dbReference>
<dbReference type="Gene3D" id="3.40.50.150">
    <property type="entry name" value="Vaccinia Virus protein VP39"/>
    <property type="match status" value="2"/>
</dbReference>
<dbReference type="HAMAP" id="MF_01858">
    <property type="entry name" value="23SrRNA_methyltr_KL"/>
    <property type="match status" value="1"/>
</dbReference>
<dbReference type="InterPro" id="IPR017244">
    <property type="entry name" value="23SrRNA_methyltr_KL"/>
</dbReference>
<dbReference type="InterPro" id="IPR002052">
    <property type="entry name" value="DNA_methylase_N6_adenine_CS"/>
</dbReference>
<dbReference type="InterPro" id="IPR000241">
    <property type="entry name" value="RlmKL-like_Mtase"/>
</dbReference>
<dbReference type="InterPro" id="IPR053943">
    <property type="entry name" value="RlmKL-like_Mtase_CS"/>
</dbReference>
<dbReference type="InterPro" id="IPR054170">
    <property type="entry name" value="RlmL_1st"/>
</dbReference>
<dbReference type="InterPro" id="IPR019614">
    <property type="entry name" value="SAM-dep_methyl-trfase"/>
</dbReference>
<dbReference type="InterPro" id="IPR029063">
    <property type="entry name" value="SAM-dependent_MTases_sf"/>
</dbReference>
<dbReference type="InterPro" id="IPR004114">
    <property type="entry name" value="THUMP_dom"/>
</dbReference>
<dbReference type="NCBIfam" id="NF008748">
    <property type="entry name" value="PRK11783.1"/>
    <property type="match status" value="1"/>
</dbReference>
<dbReference type="PANTHER" id="PTHR47313">
    <property type="entry name" value="RIBOSOMAL RNA LARGE SUBUNIT METHYLTRANSFERASE K/L"/>
    <property type="match status" value="1"/>
</dbReference>
<dbReference type="PANTHER" id="PTHR47313:SF1">
    <property type="entry name" value="RIBOSOMAL RNA LARGE SUBUNIT METHYLTRANSFERASE K_L"/>
    <property type="match status" value="1"/>
</dbReference>
<dbReference type="Pfam" id="PF10672">
    <property type="entry name" value="Methyltrans_SAM"/>
    <property type="match status" value="1"/>
</dbReference>
<dbReference type="Pfam" id="PF22020">
    <property type="entry name" value="RlmL_1st"/>
    <property type="match status" value="1"/>
</dbReference>
<dbReference type="Pfam" id="PF02926">
    <property type="entry name" value="THUMP"/>
    <property type="match status" value="1"/>
</dbReference>
<dbReference type="Pfam" id="PF01170">
    <property type="entry name" value="UPF0020"/>
    <property type="match status" value="1"/>
</dbReference>
<dbReference type="PIRSF" id="PIRSF037618">
    <property type="entry name" value="RNA_Mtase_bacteria_prd"/>
    <property type="match status" value="1"/>
</dbReference>
<dbReference type="SMART" id="SM00981">
    <property type="entry name" value="THUMP"/>
    <property type="match status" value="1"/>
</dbReference>
<dbReference type="SUPFAM" id="SSF53335">
    <property type="entry name" value="S-adenosyl-L-methionine-dependent methyltransferases"/>
    <property type="match status" value="2"/>
</dbReference>
<dbReference type="PROSITE" id="PS51165">
    <property type="entry name" value="THUMP"/>
    <property type="match status" value="1"/>
</dbReference>
<dbReference type="PROSITE" id="PS01261">
    <property type="entry name" value="UPF0020"/>
    <property type="match status" value="1"/>
</dbReference>
<reference key="1">
    <citation type="journal article" date="2004" name="Nat. Genet.">
        <title>Evidence in the Legionella pneumophila genome for exploitation of host cell functions and high genome plasticity.</title>
        <authorList>
            <person name="Cazalet C."/>
            <person name="Rusniok C."/>
            <person name="Brueggemann H."/>
            <person name="Zidane N."/>
            <person name="Magnier A."/>
            <person name="Ma L."/>
            <person name="Tichit M."/>
            <person name="Jarraud S."/>
            <person name="Bouchier C."/>
            <person name="Vandenesch F."/>
            <person name="Kunst F."/>
            <person name="Etienne J."/>
            <person name="Glaser P."/>
            <person name="Buchrieser C."/>
        </authorList>
    </citation>
    <scope>NUCLEOTIDE SEQUENCE [LARGE SCALE GENOMIC DNA]</scope>
    <source>
        <strain>Lens</strain>
    </source>
</reference>
<gene>
    <name evidence="1" type="primary">rlmL</name>
    <name type="ordered locus">lpl0023</name>
</gene>
<organism>
    <name type="scientific">Legionella pneumophila (strain Lens)</name>
    <dbReference type="NCBI Taxonomy" id="297245"/>
    <lineage>
        <taxon>Bacteria</taxon>
        <taxon>Pseudomonadati</taxon>
        <taxon>Pseudomonadota</taxon>
        <taxon>Gammaproteobacteria</taxon>
        <taxon>Legionellales</taxon>
        <taxon>Legionellaceae</taxon>
        <taxon>Legionella</taxon>
    </lineage>
</organism>
<evidence type="ECO:0000255" key="1">
    <source>
        <dbReference type="HAMAP-Rule" id="MF_01858"/>
    </source>
</evidence>
<accession>Q5X0J6</accession>
<comment type="function">
    <text evidence="1">Specifically methylates the guanine in position 2445 (m2G2445) and the guanine in position 2069 (m7G2069) of 23S rRNA.</text>
</comment>
<comment type="catalytic activity">
    <reaction evidence="1">
        <text>guanosine(2445) in 23S rRNA + S-adenosyl-L-methionine = N(2)-methylguanosine(2445) in 23S rRNA + S-adenosyl-L-homocysteine + H(+)</text>
        <dbReference type="Rhea" id="RHEA:42740"/>
        <dbReference type="Rhea" id="RHEA-COMP:10215"/>
        <dbReference type="Rhea" id="RHEA-COMP:10216"/>
        <dbReference type="ChEBI" id="CHEBI:15378"/>
        <dbReference type="ChEBI" id="CHEBI:57856"/>
        <dbReference type="ChEBI" id="CHEBI:59789"/>
        <dbReference type="ChEBI" id="CHEBI:74269"/>
        <dbReference type="ChEBI" id="CHEBI:74481"/>
        <dbReference type="EC" id="2.1.1.173"/>
    </reaction>
</comment>
<comment type="catalytic activity">
    <reaction evidence="1">
        <text>guanosine(2069) in 23S rRNA + S-adenosyl-L-methionine = N(2)-methylguanosine(2069) in 23S rRNA + S-adenosyl-L-homocysteine + H(+)</text>
        <dbReference type="Rhea" id="RHEA:43772"/>
        <dbReference type="Rhea" id="RHEA-COMP:10688"/>
        <dbReference type="Rhea" id="RHEA-COMP:10689"/>
        <dbReference type="ChEBI" id="CHEBI:15378"/>
        <dbReference type="ChEBI" id="CHEBI:57856"/>
        <dbReference type="ChEBI" id="CHEBI:59789"/>
        <dbReference type="ChEBI" id="CHEBI:74269"/>
        <dbReference type="ChEBI" id="CHEBI:74481"/>
        <dbReference type="EC" id="2.1.1.264"/>
    </reaction>
</comment>
<comment type="subcellular location">
    <subcellularLocation>
        <location evidence="1">Cytoplasm</location>
    </subcellularLocation>
</comment>
<comment type="similarity">
    <text evidence="1">Belongs to the methyltransferase superfamily. RlmKL family.</text>
</comment>